<reference key="1">
    <citation type="journal article" date="1999" name="Proc. Natl. Acad. Sci. U.S.A.">
        <title>Myeloid DAP12-associating lectin (MDL)-1 is a cell surface receptor involved in the activation of myeloid cells.</title>
        <authorList>
            <person name="Bakker A.B.H."/>
            <person name="Baker E."/>
            <person name="Sutherland G.R."/>
            <person name="Phillips J.H."/>
            <person name="Lanier L.L."/>
        </authorList>
    </citation>
    <scope>NUCLEOTIDE SEQUENCE [MRNA] (ISOFORM 2)</scope>
    <scope>FUNCTION</scope>
    <scope>TISSUE SPECIFICITY</scope>
    <scope>INTERACTION WITH TYROBP</scope>
    <scope>MUTAGENESIS OF LYS-16</scope>
</reference>
<reference key="2">
    <citation type="submission" date="2000-01" db="EMBL/GenBank/DDBJ databases">
        <title>Expression of MDL-1 in human blood and cell lines.</title>
        <authorList>
            <person name="Mueller A."/>
            <person name="Merz H."/>
            <person name="Feller A.C."/>
        </authorList>
    </citation>
    <scope>NUCLEOTIDE SEQUENCE [MRNA] (ISOFORM 1)</scope>
</reference>
<reference key="3">
    <citation type="journal article" date="2003" name="Nature">
        <title>The DNA sequence of human chromosome 7.</title>
        <authorList>
            <person name="Hillier L.W."/>
            <person name="Fulton R.S."/>
            <person name="Fulton L.A."/>
            <person name="Graves T.A."/>
            <person name="Pepin K.H."/>
            <person name="Wagner-McPherson C."/>
            <person name="Layman D."/>
            <person name="Maas J."/>
            <person name="Jaeger S."/>
            <person name="Walker R."/>
            <person name="Wylie K."/>
            <person name="Sekhon M."/>
            <person name="Becker M.C."/>
            <person name="O'Laughlin M.D."/>
            <person name="Schaller M.E."/>
            <person name="Fewell G.A."/>
            <person name="Delehaunty K.D."/>
            <person name="Miner T.L."/>
            <person name="Nash W.E."/>
            <person name="Cordes M."/>
            <person name="Du H."/>
            <person name="Sun H."/>
            <person name="Edwards J."/>
            <person name="Bradshaw-Cordum H."/>
            <person name="Ali J."/>
            <person name="Andrews S."/>
            <person name="Isak A."/>
            <person name="Vanbrunt A."/>
            <person name="Nguyen C."/>
            <person name="Du F."/>
            <person name="Lamar B."/>
            <person name="Courtney L."/>
            <person name="Kalicki J."/>
            <person name="Ozersky P."/>
            <person name="Bielicki L."/>
            <person name="Scott K."/>
            <person name="Holmes A."/>
            <person name="Harkins R."/>
            <person name="Harris A."/>
            <person name="Strong C.M."/>
            <person name="Hou S."/>
            <person name="Tomlinson C."/>
            <person name="Dauphin-Kohlberg S."/>
            <person name="Kozlowicz-Reilly A."/>
            <person name="Leonard S."/>
            <person name="Rohlfing T."/>
            <person name="Rock S.M."/>
            <person name="Tin-Wollam A.-M."/>
            <person name="Abbott A."/>
            <person name="Minx P."/>
            <person name="Maupin R."/>
            <person name="Strowmatt C."/>
            <person name="Latreille P."/>
            <person name="Miller N."/>
            <person name="Johnson D."/>
            <person name="Murray J."/>
            <person name="Woessner J.P."/>
            <person name="Wendl M.C."/>
            <person name="Yang S.-P."/>
            <person name="Schultz B.R."/>
            <person name="Wallis J.W."/>
            <person name="Spieth J."/>
            <person name="Bieri T.A."/>
            <person name="Nelson J.O."/>
            <person name="Berkowicz N."/>
            <person name="Wohldmann P.E."/>
            <person name="Cook L.L."/>
            <person name="Hickenbotham M.T."/>
            <person name="Eldred J."/>
            <person name="Williams D."/>
            <person name="Bedell J.A."/>
            <person name="Mardis E.R."/>
            <person name="Clifton S.W."/>
            <person name="Chissoe S.L."/>
            <person name="Marra M.A."/>
            <person name="Raymond C."/>
            <person name="Haugen E."/>
            <person name="Gillett W."/>
            <person name="Zhou Y."/>
            <person name="James R."/>
            <person name="Phelps K."/>
            <person name="Iadanoto S."/>
            <person name="Bubb K."/>
            <person name="Simms E."/>
            <person name="Levy R."/>
            <person name="Clendenning J."/>
            <person name="Kaul R."/>
            <person name="Kent W.J."/>
            <person name="Furey T.S."/>
            <person name="Baertsch R.A."/>
            <person name="Brent M.R."/>
            <person name="Keibler E."/>
            <person name="Flicek P."/>
            <person name="Bork P."/>
            <person name="Suyama M."/>
            <person name="Bailey J.A."/>
            <person name="Portnoy M.E."/>
            <person name="Torrents D."/>
            <person name="Chinwalla A.T."/>
            <person name="Gish W.R."/>
            <person name="Eddy S.R."/>
            <person name="McPherson J.D."/>
            <person name="Olson M.V."/>
            <person name="Eichler E.E."/>
            <person name="Green E.D."/>
            <person name="Waterston R.H."/>
            <person name="Wilson R.K."/>
        </authorList>
    </citation>
    <scope>NUCLEOTIDE SEQUENCE [LARGE SCALE GENOMIC DNA]</scope>
</reference>
<reference key="4">
    <citation type="journal article" date="2004" name="Genome Res.">
        <title>The status, quality, and expansion of the NIH full-length cDNA project: the Mammalian Gene Collection (MGC).</title>
        <authorList>
            <consortium name="The MGC Project Team"/>
        </authorList>
    </citation>
    <scope>NUCLEOTIDE SEQUENCE [LARGE SCALE MRNA] (ISOFORM 1)</scope>
</reference>
<reference key="5">
    <citation type="journal article" date="2008" name="Nature">
        <title>CLEC5A is critical for dengue-virus-induced lethal disease.</title>
        <authorList>
            <person name="Chen S.T."/>
            <person name="Lin Y.L."/>
            <person name="Huang M.T."/>
            <person name="Wu M.F."/>
            <person name="Cheng S.C."/>
            <person name="Lei H.Y."/>
            <person name="Lee C.K."/>
            <person name="Chiou T.W."/>
            <person name="Wong C.H."/>
            <person name="Hsieh S.L."/>
        </authorList>
    </citation>
    <scope>FUNCTION (MICROBIAL INFECTION)</scope>
    <scope>INTERACTION WITH DENGUE VIRUS ENVELOPE PROTEIN E</scope>
</reference>
<reference key="6">
    <citation type="journal article" date="2010" name="J. Exp. Med.">
        <title>Myeloid DAP12-associating lectin (MDL)-1 regulates synovial inflammation and bone erosion associated with autoimmune arthritis.</title>
        <authorList>
            <person name="Joyce-Shaikh B."/>
            <person name="Bigler M.E."/>
            <person name="Chao C.C."/>
            <person name="Murphy E.E."/>
            <person name="Blumenschein W.M."/>
            <person name="Adamopoulos I.E."/>
            <person name="Heyworth P.G."/>
            <person name="Antonenko S."/>
            <person name="Bowman E.P."/>
            <person name="McClanahan T.K."/>
            <person name="Phillips J.H."/>
            <person name="Cua D.J."/>
        </authorList>
    </citation>
    <scope>TISSUE SPECIFICITY</scope>
</reference>
<reference key="7">
    <citation type="journal article" date="2011" name="J. Biol. Chem.">
        <title>Structural flexibility of the macrophage dengue virus receptor CLEC5A: Implications for ligand binding and signaling.</title>
        <authorList>
            <person name="Watson A.A."/>
            <person name="Lebedev A.A."/>
            <person name="Hall B.A."/>
            <person name="Fenton-May A.E."/>
            <person name="Vagin A.A."/>
            <person name="Dejnirattisai W."/>
            <person name="Felce J."/>
            <person name="Mongkolsapaya J."/>
            <person name="Palma A.S."/>
            <person name="Liu Y."/>
            <person name="Feizi T."/>
            <person name="Screaton G.R."/>
            <person name="Murshudov G.N."/>
            <person name="O'Callaghan C.A."/>
        </authorList>
    </citation>
    <scope>X-RAY CRYSTALLOGRAPHY (1.9 ANGSTROMS) OF 71-187</scope>
    <scope>SUBUNIT</scope>
    <scope>SUBCELLULAR LOCATION</scope>
    <scope>FUNCTION (MICROBIAL INFECTION)</scope>
    <scope>INTERACTION WITH DENGUE VIRUS ENVELOPE PROTEIN E</scope>
</reference>
<sequence>MNWHMIISGLIVVVLKVVGMTLFLLYFPQIFNKSNDGFTTTRSYGTVSQIFGSSSPSPNGFITTRSYGTVCPKDWEFYQARCFFLSTSESSWNESRDFCKGKGSTLAIVNTPEKLKFLQDITDAEKYFIGLIYHREEKRWRWINNSVFNGNVTNQNQNFNCATIGLTKTFDAASCDISYRRICEKNAK</sequence>
<feature type="chain" id="PRO_0000046632" description="C-type lectin domain family 5 member A">
    <location>
        <begin position="1"/>
        <end position="188"/>
    </location>
</feature>
<feature type="topological domain" description="Cytoplasmic" evidence="2">
    <location>
        <begin position="1"/>
        <end position="4"/>
    </location>
</feature>
<feature type="transmembrane region" description="Helical; Signal-anchor for type II membrane protein" evidence="2">
    <location>
        <begin position="5"/>
        <end position="27"/>
    </location>
</feature>
<feature type="topological domain" description="Extracellular" evidence="2">
    <location>
        <begin position="28"/>
        <end position="188"/>
    </location>
</feature>
<feature type="domain" description="C-type lectin" evidence="3">
    <location>
        <begin position="78"/>
        <end position="184"/>
    </location>
</feature>
<feature type="glycosylation site" description="N-linked (GlcNAc...) asparagine" evidence="2">
    <location>
        <position position="32"/>
    </location>
</feature>
<feature type="glycosylation site" description="N-linked (GlcNAc...) asparagine" evidence="2">
    <location>
        <position position="93"/>
    </location>
</feature>
<feature type="glycosylation site" description="N-linked (GlcNAc...) asparagine" evidence="2">
    <location>
        <position position="144"/>
    </location>
</feature>
<feature type="glycosylation site" description="N-linked (GlcNAc...) asparagine" evidence="2">
    <location>
        <position position="151"/>
    </location>
</feature>
<feature type="disulfide bond" evidence="3">
    <location>
        <begin position="71"/>
        <end position="82"/>
    </location>
</feature>
<feature type="disulfide bond" evidence="3">
    <location>
        <begin position="99"/>
        <end position="183"/>
    </location>
</feature>
<feature type="disulfide bond" evidence="3">
    <location>
        <begin position="161"/>
        <end position="175"/>
    </location>
</feature>
<feature type="splice variant" id="VSP_012839" description="In isoform 2." evidence="8">
    <location>
        <position position="116"/>
    </location>
</feature>
<feature type="sequence variant" id="VAR_050110" description="In dbSNP:rs35942193.">
    <original>R</original>
    <variation>H</variation>
    <location>
        <position position="141"/>
    </location>
</feature>
<feature type="mutagenesis site" description="Abolishes interaction with TYROBP." evidence="4">
    <original>K</original>
    <variation>I</variation>
    <location>
        <position position="16"/>
    </location>
</feature>
<feature type="strand" evidence="9">
    <location>
        <begin position="76"/>
        <end position="78"/>
    </location>
</feature>
<feature type="strand" evidence="9">
    <location>
        <begin position="81"/>
        <end position="85"/>
    </location>
</feature>
<feature type="helix" evidence="9">
    <location>
        <begin position="92"/>
        <end position="100"/>
    </location>
</feature>
<feature type="turn" evidence="9">
    <location>
        <begin position="101"/>
        <end position="103"/>
    </location>
</feature>
<feature type="helix" evidence="9">
    <location>
        <begin position="112"/>
        <end position="122"/>
    </location>
</feature>
<feature type="strand" evidence="9">
    <location>
        <begin position="127"/>
        <end position="133"/>
    </location>
</feature>
<feature type="turn" evidence="9">
    <location>
        <begin position="135"/>
        <end position="137"/>
    </location>
</feature>
<feature type="strand" evidence="9">
    <location>
        <begin position="138"/>
        <end position="142"/>
    </location>
</feature>
<feature type="turn" evidence="9">
    <location>
        <begin position="143"/>
        <end position="145"/>
    </location>
</feature>
<feature type="strand" evidence="9">
    <location>
        <begin position="152"/>
        <end position="154"/>
    </location>
</feature>
<feature type="strand" evidence="9">
    <location>
        <begin position="161"/>
        <end position="173"/>
    </location>
</feature>
<feature type="strand" evidence="9">
    <location>
        <begin position="179"/>
        <end position="186"/>
    </location>
</feature>
<proteinExistence type="evidence at protein level"/>
<accession>Q9NY25</accession>
<accession>Q52M11</accession>
<accession>Q9UKQ0</accession>
<name>CLC5A_HUMAN</name>
<protein>
    <recommendedName>
        <fullName>C-type lectin domain family 5 member A</fullName>
    </recommendedName>
    <alternativeName>
        <fullName>C-type lectin superfamily member 5</fullName>
    </alternativeName>
    <alternativeName>
        <fullName>Myeloid DAP12-associating lectin 1</fullName>
        <shortName>MDL-1</shortName>
    </alternativeName>
</protein>
<comment type="function">
    <text evidence="1 4">Functions as a positive regulator of osteoclastogenesis (By similarity). Cell surface receptor that signals via TYROBP (PubMed:10449773). Regulates inflammatory responses (By similarity).</text>
</comment>
<comment type="function">
    <text evidence="5 7">(Microbial infection) Critical macrophage receptor for dengue virus serotypes 1-4 (PubMed:18496526, PubMed:21566123). The binding of dengue virus to CLEC5A triggers signaling through the phosphorylation of TYROBP (PubMed:18496526). This interaction does not result in viral entry, but stimulates pro-inflammatory cytokine release (PubMed:18496526).</text>
</comment>
<comment type="subunit">
    <text evidence="1 4 7">Monomer (PubMed:21566123). Homodimer (PubMed:21566123). The majority of CLEC5A is expressed as a monomeric form on macrophages (PubMed:21566123). Interacts with TYROBP/DAP12 (PubMed:10449773). The interaction with TYROBP is required for CLEC5A cell surface expression (PubMed:10449773). Interacts with HCST/DAP10 (By similarity). Forms a CLEC5A/TYROBP/HCST trimolecular complex depending almost solely on TYROBP (By similarity).</text>
</comment>
<comment type="subunit">
    <text evidence="5 7">(Microbial infection) Interacts with dengue virus envelope protein E (PubMed:18496526, PubMed:21566123).</text>
</comment>
<comment type="subcellular location">
    <subcellularLocation>
        <location evidence="7">Cell membrane</location>
        <topology evidence="7">Single-pass type II membrane protein</topology>
    </subcellularLocation>
</comment>
<comment type="alternative products">
    <event type="alternative splicing"/>
    <isoform>
        <id>Q9NY25-1</id>
        <name>1</name>
        <sequence type="displayed"/>
    </isoform>
    <isoform>
        <id>Q9NY25-2</id>
        <name>2</name>
        <sequence type="described" ref="VSP_012839"/>
    </isoform>
</comment>
<comment type="tissue specificity">
    <text evidence="4 6">Highly expressed in bone marrow with lower levels in synovium, lung and bronchus (PubMed:20212065). Expressed in peripheral blood monocytes and in the monocyte/macrophage cell lines U-937 and Mono-Mac-6, but not in cell lines of other origins (PubMed:10449773). Expression is down-regulated when monocytes differentiate into dendritic cells (PubMed:10449773).</text>
</comment>
<comment type="PTM">
    <text evidence="1">N-glycosylated. Contains sialic acid residues.</text>
</comment>
<comment type="miscellaneous">
    <text evidence="1">Acts as a key regulator of synovial injury and bone erosion during autoimmune joint inflammation when its activation leads to enhanced recruitment of inflammatory macrophages and neutrophils to the joints.</text>
</comment>
<comment type="online information" name="Functional Glycomics Gateway - Glycan Binding">
    <link uri="http://www.functionalglycomics.org/glycomics/GBPServlet?&amp;operationType=view&amp;cbpId=cbp_hum_Ctlect_244"/>
    <text>MDL-1</text>
</comment>
<evidence type="ECO:0000250" key="1">
    <source>
        <dbReference type="UniProtKB" id="Q9R007"/>
    </source>
</evidence>
<evidence type="ECO:0000255" key="2"/>
<evidence type="ECO:0000255" key="3">
    <source>
        <dbReference type="PROSITE-ProRule" id="PRU00040"/>
    </source>
</evidence>
<evidence type="ECO:0000269" key="4">
    <source>
    </source>
</evidence>
<evidence type="ECO:0000269" key="5">
    <source>
    </source>
</evidence>
<evidence type="ECO:0000269" key="6">
    <source>
    </source>
</evidence>
<evidence type="ECO:0000269" key="7">
    <source>
    </source>
</evidence>
<evidence type="ECO:0000303" key="8">
    <source>
    </source>
</evidence>
<evidence type="ECO:0007829" key="9">
    <source>
        <dbReference type="PDB" id="2YHF"/>
    </source>
</evidence>
<keyword id="KW-0002">3D-structure</keyword>
<keyword id="KW-0025">Alternative splicing</keyword>
<keyword id="KW-1003">Cell membrane</keyword>
<keyword id="KW-1015">Disulfide bond</keyword>
<keyword id="KW-0325">Glycoprotein</keyword>
<keyword id="KW-1183">Host cell receptor for virus entry</keyword>
<keyword id="KW-0945">Host-virus interaction</keyword>
<keyword id="KW-0391">Immunity</keyword>
<keyword id="KW-0399">Innate immunity</keyword>
<keyword id="KW-0430">Lectin</keyword>
<keyword id="KW-0472">Membrane</keyword>
<keyword id="KW-1267">Proteomics identification</keyword>
<keyword id="KW-0675">Receptor</keyword>
<keyword id="KW-1185">Reference proteome</keyword>
<keyword id="KW-0735">Signal-anchor</keyword>
<keyword id="KW-0812">Transmembrane</keyword>
<keyword id="KW-1133">Transmembrane helix</keyword>
<organism>
    <name type="scientific">Homo sapiens</name>
    <name type="common">Human</name>
    <dbReference type="NCBI Taxonomy" id="9606"/>
    <lineage>
        <taxon>Eukaryota</taxon>
        <taxon>Metazoa</taxon>
        <taxon>Chordata</taxon>
        <taxon>Craniata</taxon>
        <taxon>Vertebrata</taxon>
        <taxon>Euteleostomi</taxon>
        <taxon>Mammalia</taxon>
        <taxon>Eutheria</taxon>
        <taxon>Euarchontoglires</taxon>
        <taxon>Primates</taxon>
        <taxon>Haplorrhini</taxon>
        <taxon>Catarrhini</taxon>
        <taxon>Hominidae</taxon>
        <taxon>Homo</taxon>
    </lineage>
</organism>
<gene>
    <name type="primary">CLEC5A</name>
    <name type="synonym">CLECSF5</name>
    <name type="synonym">MDL1</name>
</gene>
<dbReference type="EMBL" id="AF139768">
    <property type="protein sequence ID" value="AAF02491.1"/>
    <property type="molecule type" value="mRNA"/>
</dbReference>
<dbReference type="EMBL" id="AJ271684">
    <property type="protein sequence ID" value="CAB71334.1"/>
    <property type="molecule type" value="mRNA"/>
</dbReference>
<dbReference type="EMBL" id="AC073647">
    <property type="protein sequence ID" value="AAS07444.1"/>
    <property type="molecule type" value="Genomic_DNA"/>
</dbReference>
<dbReference type="EMBL" id="BC093714">
    <property type="protein sequence ID" value="AAH93714.1"/>
    <property type="molecule type" value="mRNA"/>
</dbReference>
<dbReference type="EMBL" id="BC112099">
    <property type="protein sequence ID" value="AAI12100.1"/>
    <property type="molecule type" value="mRNA"/>
</dbReference>
<dbReference type="EMBL" id="BC113098">
    <property type="protein sequence ID" value="AAI13099.1"/>
    <property type="molecule type" value="mRNA"/>
</dbReference>
<dbReference type="CCDS" id="CCDS5870.1">
    <molecule id="Q9NY25-1"/>
</dbReference>
<dbReference type="RefSeq" id="NP_037384.1">
    <molecule id="Q9NY25-1"/>
    <property type="nucleotide sequence ID" value="NM_013252.3"/>
</dbReference>
<dbReference type="PDB" id="2YHF">
    <property type="method" value="X-ray"/>
    <property type="resolution" value="1.90 A"/>
    <property type="chains" value="A/B/C/D/E/F/G/H/I=70-187"/>
</dbReference>
<dbReference type="PDBsum" id="2YHF"/>
<dbReference type="SMR" id="Q9NY25"/>
<dbReference type="BioGRID" id="117135">
    <property type="interactions" value="30"/>
</dbReference>
<dbReference type="DIP" id="DIP-60627N"/>
<dbReference type="FunCoup" id="Q9NY25">
    <property type="interactions" value="41"/>
</dbReference>
<dbReference type="IntAct" id="Q9NY25">
    <property type="interactions" value="16"/>
</dbReference>
<dbReference type="STRING" id="9606.ENSP00000449999"/>
<dbReference type="UniLectin" id="Q9NY25"/>
<dbReference type="GlyCosmos" id="Q9NY25">
    <property type="glycosylation" value="4 sites, No reported glycans"/>
</dbReference>
<dbReference type="GlyGen" id="Q9NY25">
    <property type="glycosylation" value="4 sites"/>
</dbReference>
<dbReference type="BioMuta" id="CLEC5A"/>
<dbReference type="DMDM" id="59797971"/>
<dbReference type="MassIVE" id="Q9NY25"/>
<dbReference type="PaxDb" id="9606-ENSP00000449999"/>
<dbReference type="PeptideAtlas" id="Q9NY25"/>
<dbReference type="ProteomicsDB" id="83151">
    <molecule id="Q9NY25-1"/>
</dbReference>
<dbReference type="ProteomicsDB" id="83152">
    <molecule id="Q9NY25-2"/>
</dbReference>
<dbReference type="Antibodypedia" id="50228">
    <property type="antibodies" value="261 antibodies from 27 providers"/>
</dbReference>
<dbReference type="DNASU" id="23601"/>
<dbReference type="Ensembl" id="ENST00000546910.6">
    <molecule id="Q9NY25-1"/>
    <property type="protein sequence ID" value="ENSP00000449999.1"/>
    <property type="gene ID" value="ENSG00000258227.7"/>
</dbReference>
<dbReference type="GeneID" id="23601"/>
<dbReference type="KEGG" id="hsa:23601"/>
<dbReference type="MANE-Select" id="ENST00000546910.6">
    <property type="protein sequence ID" value="ENSP00000449999.1"/>
    <property type="RefSeq nucleotide sequence ID" value="NM_013252.3"/>
    <property type="RefSeq protein sequence ID" value="NP_037384.1"/>
</dbReference>
<dbReference type="UCSC" id="uc003vwv.1">
    <molecule id="Q9NY25-1"/>
    <property type="organism name" value="human"/>
</dbReference>
<dbReference type="AGR" id="HGNC:2054"/>
<dbReference type="CTD" id="23601"/>
<dbReference type="DisGeNET" id="23601"/>
<dbReference type="GeneCards" id="CLEC5A"/>
<dbReference type="HGNC" id="HGNC:2054">
    <property type="gene designation" value="CLEC5A"/>
</dbReference>
<dbReference type="HPA" id="ENSG00000258227">
    <property type="expression patterns" value="Tissue enriched (bone)"/>
</dbReference>
<dbReference type="MIM" id="604987">
    <property type="type" value="gene"/>
</dbReference>
<dbReference type="neXtProt" id="NX_Q9NY25"/>
<dbReference type="OpenTargets" id="ENSG00000258227"/>
<dbReference type="PharmGKB" id="PA26583"/>
<dbReference type="VEuPathDB" id="HostDB:ENSG00000258227"/>
<dbReference type="eggNOG" id="KOG4297">
    <property type="taxonomic scope" value="Eukaryota"/>
</dbReference>
<dbReference type="GeneTree" id="ENSGT00910000144330"/>
<dbReference type="InParanoid" id="Q9NY25"/>
<dbReference type="OMA" id="WHWIDNS"/>
<dbReference type="OrthoDB" id="7357196at2759"/>
<dbReference type="PAN-GO" id="Q9NY25">
    <property type="GO annotations" value="2 GO annotations based on evolutionary models"/>
</dbReference>
<dbReference type="PhylomeDB" id="Q9NY25"/>
<dbReference type="TreeFam" id="TF337735"/>
<dbReference type="PathwayCommons" id="Q9NY25"/>
<dbReference type="Reactome" id="R-HSA-2172127">
    <property type="pathway name" value="DAP12 interactions"/>
</dbReference>
<dbReference type="Reactome" id="R-HSA-6798695">
    <property type="pathway name" value="Neutrophil degranulation"/>
</dbReference>
<dbReference type="SignaLink" id="Q9NY25"/>
<dbReference type="BioGRID-ORCS" id="23601">
    <property type="hits" value="9 hits in 1143 CRISPR screens"/>
</dbReference>
<dbReference type="ChiTaRS" id="CLEC5A">
    <property type="organism name" value="human"/>
</dbReference>
<dbReference type="EvolutionaryTrace" id="Q9NY25"/>
<dbReference type="GeneWiki" id="CLEC5A"/>
<dbReference type="GenomeRNAi" id="23601"/>
<dbReference type="Pharos" id="Q9NY25">
    <property type="development level" value="Tbio"/>
</dbReference>
<dbReference type="PRO" id="PR:Q9NY25"/>
<dbReference type="Proteomes" id="UP000005640">
    <property type="component" value="Chromosome 7"/>
</dbReference>
<dbReference type="RNAct" id="Q9NY25">
    <property type="molecule type" value="protein"/>
</dbReference>
<dbReference type="Bgee" id="ENSG00000258227">
    <property type="expression patterns" value="Expressed in bone marrow and 101 other cell types or tissues"/>
</dbReference>
<dbReference type="ExpressionAtlas" id="Q9NY25">
    <property type="expression patterns" value="baseline and differential"/>
</dbReference>
<dbReference type="GO" id="GO:0009986">
    <property type="term" value="C:cell surface"/>
    <property type="evidence" value="ECO:0000250"/>
    <property type="project" value="UniProtKB"/>
</dbReference>
<dbReference type="GO" id="GO:0005829">
    <property type="term" value="C:cytosol"/>
    <property type="evidence" value="ECO:0000314"/>
    <property type="project" value="HPA"/>
</dbReference>
<dbReference type="GO" id="GO:0005886">
    <property type="term" value="C:plasma membrane"/>
    <property type="evidence" value="ECO:0000314"/>
    <property type="project" value="HPA"/>
</dbReference>
<dbReference type="GO" id="GO:0035579">
    <property type="term" value="C:specific granule membrane"/>
    <property type="evidence" value="ECO:0000304"/>
    <property type="project" value="Reactome"/>
</dbReference>
<dbReference type="GO" id="GO:0070821">
    <property type="term" value="C:tertiary granule membrane"/>
    <property type="evidence" value="ECO:0000304"/>
    <property type="project" value="Reactome"/>
</dbReference>
<dbReference type="GO" id="GO:0030246">
    <property type="term" value="F:carbohydrate binding"/>
    <property type="evidence" value="ECO:0007669"/>
    <property type="project" value="UniProtKB-KW"/>
</dbReference>
<dbReference type="GO" id="GO:0001618">
    <property type="term" value="F:virus receptor activity"/>
    <property type="evidence" value="ECO:0000314"/>
    <property type="project" value="UniProtKB"/>
</dbReference>
<dbReference type="GO" id="GO:0006968">
    <property type="term" value="P:cellular defense response"/>
    <property type="evidence" value="ECO:0000304"/>
    <property type="project" value="ProtInc"/>
</dbReference>
<dbReference type="GO" id="GO:0045087">
    <property type="term" value="P:innate immune response"/>
    <property type="evidence" value="ECO:0000314"/>
    <property type="project" value="UniProtKB"/>
</dbReference>
<dbReference type="GO" id="GO:0030099">
    <property type="term" value="P:myeloid cell differentiation"/>
    <property type="evidence" value="ECO:0007669"/>
    <property type="project" value="Ensembl"/>
</dbReference>
<dbReference type="GO" id="GO:0043066">
    <property type="term" value="P:negative regulation of apoptotic process"/>
    <property type="evidence" value="ECO:0000250"/>
    <property type="project" value="UniProtKB"/>
</dbReference>
<dbReference type="GO" id="GO:0033033">
    <property type="term" value="P:negative regulation of myeloid cell apoptotic process"/>
    <property type="evidence" value="ECO:0007669"/>
    <property type="project" value="Ensembl"/>
</dbReference>
<dbReference type="GO" id="GO:0002076">
    <property type="term" value="P:osteoblast development"/>
    <property type="evidence" value="ECO:0000250"/>
    <property type="project" value="UniProtKB"/>
</dbReference>
<dbReference type="GO" id="GO:0001819">
    <property type="term" value="P:positive regulation of cytokine production"/>
    <property type="evidence" value="ECO:0007669"/>
    <property type="project" value="Ensembl"/>
</dbReference>
<dbReference type="GO" id="GO:0007165">
    <property type="term" value="P:signal transduction"/>
    <property type="evidence" value="ECO:0000304"/>
    <property type="project" value="ProtInc"/>
</dbReference>
<dbReference type="CDD" id="cd03593">
    <property type="entry name" value="CLECT_NK_receptors_like"/>
    <property type="match status" value="1"/>
</dbReference>
<dbReference type="FunFam" id="3.10.100.10:FF:000065">
    <property type="entry name" value="C-type lectin domain family 5 member A"/>
    <property type="match status" value="1"/>
</dbReference>
<dbReference type="Gene3D" id="3.10.100.10">
    <property type="entry name" value="Mannose-Binding Protein A, subunit A"/>
    <property type="match status" value="1"/>
</dbReference>
<dbReference type="InterPro" id="IPR001304">
    <property type="entry name" value="C-type_lectin-like"/>
</dbReference>
<dbReference type="InterPro" id="IPR016186">
    <property type="entry name" value="C-type_lectin-like/link_sf"/>
</dbReference>
<dbReference type="InterPro" id="IPR052869">
    <property type="entry name" value="CLEC5A"/>
</dbReference>
<dbReference type="InterPro" id="IPR016187">
    <property type="entry name" value="CTDL_fold"/>
</dbReference>
<dbReference type="InterPro" id="IPR033992">
    <property type="entry name" value="NKR-like_CTLD"/>
</dbReference>
<dbReference type="PANTHER" id="PTHR47536">
    <property type="entry name" value="C-TYPE LECTIN DOMAIN FAMILY 5 MEMBER A"/>
    <property type="match status" value="1"/>
</dbReference>
<dbReference type="PANTHER" id="PTHR47536:SF1">
    <property type="entry name" value="C-TYPE LECTIN DOMAIN FAMILY 5 MEMBER A"/>
    <property type="match status" value="1"/>
</dbReference>
<dbReference type="Pfam" id="PF00059">
    <property type="entry name" value="Lectin_C"/>
    <property type="match status" value="1"/>
</dbReference>
<dbReference type="SMART" id="SM00034">
    <property type="entry name" value="CLECT"/>
    <property type="match status" value="1"/>
</dbReference>
<dbReference type="SUPFAM" id="SSF56436">
    <property type="entry name" value="C-type lectin-like"/>
    <property type="match status" value="1"/>
</dbReference>
<dbReference type="PROSITE" id="PS50041">
    <property type="entry name" value="C_TYPE_LECTIN_2"/>
    <property type="match status" value="1"/>
</dbReference>